<reference key="1">
    <citation type="journal article" date="2007" name="Gene">
        <title>A domain of the thyroid adenoma associated gene (THADA) conserved in vertebrates becomes destroyed by chromosomal rearrangements observed in thyroid adenomas.</title>
        <authorList>
            <person name="Drieschner N."/>
            <person name="Kerschling S."/>
            <person name="Soller J.T."/>
            <person name="Rippe V."/>
            <person name="Belge G."/>
            <person name="Bullerdiek J."/>
            <person name="Nimzyk R."/>
        </authorList>
    </citation>
    <scope>NUCLEOTIDE SEQUENCE [MRNA]</scope>
    <source>
        <tissue>Liver</tissue>
    </source>
</reference>
<name>THADA_CHICK</name>
<comment type="function">
    <text evidence="1">Together with methyltransferase FTSJ1, methylates the 2'-O-ribose of nucleotides at position 32 of the anticodon loop of substrate tRNAs.</text>
</comment>
<comment type="similarity">
    <text evidence="2">Belongs to the THADA family.</text>
</comment>
<feature type="chain" id="PRO_0000344059" description="tRNA (32-2'-O)-methyltransferase regulator THADA">
    <location>
        <begin position="1"/>
        <end position="1930"/>
    </location>
</feature>
<protein>
    <recommendedName>
        <fullName evidence="2">tRNA (32-2'-O)-methyltransferase regulator THADA</fullName>
    </recommendedName>
    <alternativeName>
        <fullName>Thyroid adenoma-associated protein homolog</fullName>
    </alternativeName>
</protein>
<gene>
    <name type="primary">THADA</name>
</gene>
<proteinExistence type="evidence at transcript level"/>
<sequence length="1930" mass="216614">MVLKKKKKEIQVDAFSLDCQQLEKLQGFSKAEEQNLASLLLHCAQLSNGIQQIQCIKQIMPLVKAMDQNSACDPMLKACLEILGETYFSLNMKNPLKKVLASSLNGLPEWFMTLAVQSFVCCLREELKTTDVYLYRKVLDNLASCMEDFNLGRASITNLFEEVLQFLQKALLDIQEENRSNNGNRIVQTRLMHDLLMAIKVAMMLVQKLQENIQGSLWKNHESFVWQSMCNLLKSSSDFLMDETLLQTVQTTSGLAFILFTKAMYEPAEELPSLVSDLLCGSRKLASMPAWFVNNCGALCTEQLSDSVLLFLCHGALAMLDWKSGSMGENGEKLLLDIASVLLSLSSELKESSMATSLSRILAIWTNSALAALIPDSPNLKVKLNGNSEVVGKLLEYVYTHWEHPLDAVRHQSKLIFRNLLQIHRTIIAASDEKSDPFFARLTRRLLSLEWHVKGKYASLACLVECLGTENILQLDRSIPVQILNVMNDQSLAPYASDLLETMFTNHKVQFTSGSQKSTWIDQWHDVWVSPLLQILCEGNHDQTTYIIDYYLPKLLRCSPDSLSYMIRILQASADANLGSWSTRGALGALMACLRTARAHGHLELSNIMSRGLVSTESIKQGLVHQHNQVCIDALGLLCETHRSTEIVSVEEMQLILFFITYNLNSQSPSVRQQICSLLRKLFCRIRESSQVLYKWEQNKTKQELFEDSPKRNPLGILQKYQDFLSSLCDRLFEALFPGSSHPTRFSALSILGSVAEIFSVQKGQEQVFRLDQEINSARVRTLIQCFASTFEEVKVLAFELLMKLRDVVFXLQDSESLDLLFQAAMDLSTSTKPYDCVTASYLLNFLAYHEDLQHICLGKWIKHNPQMNEDTSVGTVEKNILAVIKLLLVNVEEEIFQAKKSLLQAAASFPMYGRVHCINGALQQLPLNNLMFVTEWKQIVARLILMSYELSAVVSPVVQSSSPEGLIPMDIDSETADRLHMILKEIQPQDTNDYFMQAKMLKEHCKIQSEKLAEHKPMENICTEMRGKESQICDVTAQMVLVCCWRSMKEVSLLLGTLCKLLPTQASSEPSHGLITVEQVKNIGDYFKHHLMQSRHRGAFELAYAGFVQLTETLSRCNSESLRKMPEQWLRCVLEEIKSCDPSSTLCATRRSAGIPFYIQALLASEPKKGKMDLLKMTIKELMSLASPSSEPPSAIPQVHALNILRALFRDTRLGENIMPYVADGIQAAILGFTSPIWAVRNSSTLLFSALITRIFGVKRGKDENSKKNRMTGAEFFSRFPSLYPFLLKQLEVVANTLNSEDEELKIHPSLFLLLLILGKLYPSPMDGTYSALSMAPFXPFIIRCGHSPVYRSREMSGRALVPFVMINEVPHTVLSLLKGLPDSASLCIRQNNIHGTLLQVSHLLQSYLDSKQLGNSDFEQGLSDIVTCIGSKLWLAKRPNPCLVTRAAFLDVLVMLSTHLGNSQKQGMQFVEFWEEMNRVISECELMTGIPYLTAVPGLVQYLQSITKLVISVLSVTSAADIQSSSSPTAMKIAKPPLSIVHLLHSEFHEVRLLALEAVLLWLKKVNAKQIAKEGGVLCLLVDLEGVLLSMTLKEKNLECFYKVLEILYNMDLRNVLPKIECSIKMNPNEFLTWSLDIMDNSNSTEVRSMALKFASKLVVHLLENHQQISEEVLKKWVQQLIYFCGDEQETEMLLAAAEVFRSITSLLLISEKLVLGLSDTLAMWKCVILLLQNEDLVVRDAAAEVLQVAQAEKKSSXGAGFMFRVMNAPLALDLAFGTLCEQLQQWGQTCAGIPVLLEWLLGDSDPRGGLEPSAPEEDECLFDKGEVNFWAEKLTSARLLGKHLLLLAQATHLALPDGGELDRLCRRAQDQAQLTARLLTALPPSPEFLKTAEFTKLAIQNEQISLCLKILNLLQSVGKGKDGNLKE</sequence>
<organism>
    <name type="scientific">Gallus gallus</name>
    <name type="common">Chicken</name>
    <dbReference type="NCBI Taxonomy" id="9031"/>
    <lineage>
        <taxon>Eukaryota</taxon>
        <taxon>Metazoa</taxon>
        <taxon>Chordata</taxon>
        <taxon>Craniata</taxon>
        <taxon>Vertebrata</taxon>
        <taxon>Euteleostomi</taxon>
        <taxon>Archelosauria</taxon>
        <taxon>Archosauria</taxon>
        <taxon>Dinosauria</taxon>
        <taxon>Saurischia</taxon>
        <taxon>Theropoda</taxon>
        <taxon>Coelurosauria</taxon>
        <taxon>Aves</taxon>
        <taxon>Neognathae</taxon>
        <taxon>Galloanserae</taxon>
        <taxon>Galliformes</taxon>
        <taxon>Phasianidae</taxon>
        <taxon>Phasianinae</taxon>
        <taxon>Gallus</taxon>
    </lineage>
</organism>
<accession>A8C754</accession>
<keyword id="KW-1185">Reference proteome</keyword>
<keyword id="KW-0819">tRNA processing</keyword>
<evidence type="ECO:0000250" key="1">
    <source>
        <dbReference type="UniProtKB" id="Q6YHU6"/>
    </source>
</evidence>
<evidence type="ECO:0000305" key="2"/>
<dbReference type="EMBL" id="EF222206">
    <property type="protein sequence ID" value="ABQ10600.1"/>
    <property type="molecule type" value="mRNA"/>
</dbReference>
<dbReference type="RefSeq" id="NP_001103529.2">
    <property type="nucleotide sequence ID" value="NM_001110059.2"/>
</dbReference>
<dbReference type="FunCoup" id="A8C754">
    <property type="interactions" value="2406"/>
</dbReference>
<dbReference type="STRING" id="9031.ENSGALP00000045378"/>
<dbReference type="PaxDb" id="9031-ENSGALP00000016128"/>
<dbReference type="GeneID" id="421398"/>
<dbReference type="KEGG" id="gga:421398"/>
<dbReference type="CTD" id="63892"/>
<dbReference type="VEuPathDB" id="HostDB:geneid_421398"/>
<dbReference type="eggNOG" id="KOG1810">
    <property type="taxonomic scope" value="Eukaryota"/>
</dbReference>
<dbReference type="InParanoid" id="A8C754"/>
<dbReference type="OrthoDB" id="73997at2759"/>
<dbReference type="PhylomeDB" id="A8C754"/>
<dbReference type="PRO" id="PR:A8C754"/>
<dbReference type="Proteomes" id="UP000000539">
    <property type="component" value="Unassembled WGS sequence"/>
</dbReference>
<dbReference type="GO" id="GO:0030488">
    <property type="term" value="P:tRNA methylation"/>
    <property type="evidence" value="ECO:0000318"/>
    <property type="project" value="GO_Central"/>
</dbReference>
<dbReference type="GO" id="GO:0002128">
    <property type="term" value="P:tRNA nucleoside ribose methylation"/>
    <property type="evidence" value="ECO:0000250"/>
    <property type="project" value="UniProtKB"/>
</dbReference>
<dbReference type="InterPro" id="IPR016024">
    <property type="entry name" value="ARM-type_fold"/>
</dbReference>
<dbReference type="InterPro" id="IPR056843">
    <property type="entry name" value="THADA-like_TPR"/>
</dbReference>
<dbReference type="InterPro" id="IPR056842">
    <property type="entry name" value="THADA-like_TPR_C"/>
</dbReference>
<dbReference type="InterPro" id="IPR019442">
    <property type="entry name" value="THADA/TRM732_DUF2428"/>
</dbReference>
<dbReference type="InterPro" id="IPR051954">
    <property type="entry name" value="tRNA_methyltransferase_THADA"/>
</dbReference>
<dbReference type="PANTHER" id="PTHR14387">
    <property type="entry name" value="THADA/DEATH RECEPTOR INTERACTING PROTEIN"/>
    <property type="match status" value="1"/>
</dbReference>
<dbReference type="PANTHER" id="PTHR14387:SF7">
    <property type="entry name" value="THYROID ADENOMA-ASSOCIATED PROTEIN"/>
    <property type="match status" value="1"/>
</dbReference>
<dbReference type="Pfam" id="PF10350">
    <property type="entry name" value="DUF2428"/>
    <property type="match status" value="1"/>
</dbReference>
<dbReference type="Pfam" id="PF25150">
    <property type="entry name" value="TPR_Trm732"/>
    <property type="match status" value="1"/>
</dbReference>
<dbReference type="Pfam" id="PF25151">
    <property type="entry name" value="TPR_Trm732_C"/>
    <property type="match status" value="1"/>
</dbReference>
<dbReference type="SUPFAM" id="SSF48371">
    <property type="entry name" value="ARM repeat"/>
    <property type="match status" value="2"/>
</dbReference>